<protein>
    <recommendedName>
        <fullName>Synaptic vesicle glycoprotein 2A</fullName>
    </recommendedName>
</protein>
<evidence type="ECO:0000250" key="1"/>
<evidence type="ECO:0000250" key="2">
    <source>
        <dbReference type="UniProtKB" id="Q02563"/>
    </source>
</evidence>
<evidence type="ECO:0000250" key="3">
    <source>
        <dbReference type="UniProtKB" id="Q9JIS5"/>
    </source>
</evidence>
<evidence type="ECO:0000255" key="4"/>
<evidence type="ECO:0000256" key="5">
    <source>
        <dbReference type="SAM" id="MobiDB-lite"/>
    </source>
</evidence>
<evidence type="ECO:0000269" key="6">
    <source>
    </source>
</evidence>
<evidence type="ECO:0000269" key="7">
    <source>
    </source>
</evidence>
<evidence type="ECO:0000269" key="8">
    <source>
    </source>
</evidence>
<evidence type="ECO:0000303" key="9">
    <source>
    </source>
</evidence>
<evidence type="ECO:0000305" key="10"/>
<evidence type="ECO:0000305" key="11">
    <source>
    </source>
</evidence>
<evidence type="ECO:0007744" key="12">
    <source>
    </source>
</evidence>
<evidence type="ECO:0007829" key="13">
    <source>
        <dbReference type="PDB" id="8JLE"/>
    </source>
</evidence>
<evidence type="ECO:0007829" key="14">
    <source>
        <dbReference type="PDB" id="8JLG"/>
    </source>
</evidence>
<evidence type="ECO:0007829" key="15">
    <source>
        <dbReference type="PDB" id="8JLH"/>
    </source>
</evidence>
<evidence type="ECO:0007829" key="16">
    <source>
        <dbReference type="PDB" id="8JS8"/>
    </source>
</evidence>
<accession>Q7L0J3</accession>
<accession>D3DUZ7</accession>
<accession>O94841</accession>
<accession>Q5QNX8</accession>
<accession>Q7Z3L6</accession>
<accession>Q8NBJ6</accession>
<accession>Q9BVZ9</accession>
<keyword id="KW-0002">3D-structure</keyword>
<keyword id="KW-0025">Alternative splicing</keyword>
<keyword id="KW-0966">Cell projection</keyword>
<keyword id="KW-0968">Cytoplasmic vesicle</keyword>
<keyword id="KW-0225">Disease variant</keyword>
<keyword id="KW-0887">Epilepsy</keyword>
<keyword id="KW-0325">Glycoprotein</keyword>
<keyword id="KW-0472">Membrane</keyword>
<keyword id="KW-0532">Neurotransmitter transport</keyword>
<keyword id="KW-0597">Phosphoprotein</keyword>
<keyword id="KW-1267">Proteomics identification</keyword>
<keyword id="KW-1185">Reference proteome</keyword>
<keyword id="KW-0770">Synapse</keyword>
<keyword id="KW-0812">Transmembrane</keyword>
<keyword id="KW-1133">Transmembrane helix</keyword>
<keyword id="KW-0813">Transport</keyword>
<dbReference type="EMBL" id="AB018279">
    <property type="protein sequence ID" value="BAA34456.2"/>
    <property type="status" value="ALT_INIT"/>
    <property type="molecule type" value="mRNA"/>
</dbReference>
<dbReference type="EMBL" id="AK075480">
    <property type="protein sequence ID" value="BAC11645.1"/>
    <property type="molecule type" value="mRNA"/>
</dbReference>
<dbReference type="EMBL" id="BX537754">
    <property type="protein sequence ID" value="CAD97824.1"/>
    <property type="molecule type" value="mRNA"/>
</dbReference>
<dbReference type="EMBL" id="AL591493">
    <property type="protein sequence ID" value="CAI12572.1"/>
    <property type="molecule type" value="Genomic_DNA"/>
</dbReference>
<dbReference type="EMBL" id="AL591493">
    <property type="protein sequence ID" value="CAI12573.1"/>
    <property type="status" value="ALT_SEQ"/>
    <property type="molecule type" value="Genomic_DNA"/>
</dbReference>
<dbReference type="EMBL" id="CH471121">
    <property type="protein sequence ID" value="EAW53596.1"/>
    <property type="molecule type" value="Genomic_DNA"/>
</dbReference>
<dbReference type="EMBL" id="CH471121">
    <property type="protein sequence ID" value="EAW53598.1"/>
    <property type="molecule type" value="Genomic_DNA"/>
</dbReference>
<dbReference type="EMBL" id="BC000776">
    <property type="protein sequence ID" value="AAH00776.2"/>
    <property type="molecule type" value="mRNA"/>
</dbReference>
<dbReference type="EMBL" id="BC045111">
    <property type="protein sequence ID" value="AAH45111.1"/>
    <property type="molecule type" value="mRNA"/>
</dbReference>
<dbReference type="CCDS" id="CCDS940.1">
    <molecule id="Q7L0J3-1"/>
</dbReference>
<dbReference type="RefSeq" id="NP_001265648.1">
    <property type="nucleotide sequence ID" value="NM_001278719.1"/>
</dbReference>
<dbReference type="RefSeq" id="NP_001315603.1">
    <molecule id="Q7L0J3-1"/>
    <property type="nucleotide sequence ID" value="NM_001328674.2"/>
</dbReference>
<dbReference type="RefSeq" id="NP_001315604.1">
    <molecule id="Q7L0J3-1"/>
    <property type="nucleotide sequence ID" value="NM_001328675.2"/>
</dbReference>
<dbReference type="RefSeq" id="NP_055664.3">
    <molecule id="Q7L0J3-1"/>
    <property type="nucleotide sequence ID" value="NM_014849.4"/>
</dbReference>
<dbReference type="PDB" id="4V11">
    <property type="method" value="X-ray"/>
    <property type="resolution" value="1.95 A"/>
    <property type="chains" value="B=81-90"/>
</dbReference>
<dbReference type="PDB" id="8JLC">
    <property type="method" value="EM"/>
    <property type="resolution" value="2.88 A"/>
    <property type="chains" value="A=2-742"/>
</dbReference>
<dbReference type="PDB" id="8JLE">
    <property type="method" value="EM"/>
    <property type="resolution" value="2.82 A"/>
    <property type="chains" value="A=480-587"/>
</dbReference>
<dbReference type="PDB" id="8JLF">
    <property type="method" value="EM"/>
    <property type="resolution" value="3.01 A"/>
    <property type="chains" value="A=2-742"/>
</dbReference>
<dbReference type="PDB" id="8JLG">
    <property type="method" value="EM"/>
    <property type="resolution" value="2.87 A"/>
    <property type="chains" value="A=480-590"/>
</dbReference>
<dbReference type="PDB" id="8JLH">
    <property type="method" value="EM"/>
    <property type="resolution" value="2.90 A"/>
    <property type="chains" value="A/C=2-742"/>
</dbReference>
<dbReference type="PDB" id="8JLI">
    <property type="method" value="EM"/>
    <property type="resolution" value="3.38 A"/>
    <property type="chains" value="A/B=2-742"/>
</dbReference>
<dbReference type="PDB" id="8JS8">
    <property type="method" value="EM"/>
    <property type="resolution" value="2.88 A"/>
    <property type="chains" value="A=2-742"/>
</dbReference>
<dbReference type="PDB" id="8JS9">
    <property type="method" value="EM"/>
    <property type="resolution" value="3.01 A"/>
    <property type="chains" value="A=2-742"/>
</dbReference>
<dbReference type="PDB" id="8K77">
    <property type="method" value="EM"/>
    <property type="resolution" value="3.11 A"/>
    <property type="chains" value="A=2-742"/>
</dbReference>
<dbReference type="PDB" id="8UO9">
    <property type="method" value="EM"/>
    <property type="resolution" value="3.30 A"/>
    <property type="chains" value="A=64-742"/>
</dbReference>
<dbReference type="PDB" id="8UOA">
    <property type="method" value="EM"/>
    <property type="resolution" value="3.80 A"/>
    <property type="chains" value="A=64-742"/>
</dbReference>
<dbReference type="PDB" id="8YF0">
    <property type="method" value="EM"/>
    <property type="resolution" value="3.49 A"/>
    <property type="chains" value="B/C=1-734"/>
</dbReference>
<dbReference type="PDB" id="8YF1">
    <property type="method" value="EM"/>
    <property type="resolution" value="3.38 A"/>
    <property type="chains" value="A/B=1-734"/>
</dbReference>
<dbReference type="PDBsum" id="4V11"/>
<dbReference type="PDBsum" id="8JLC"/>
<dbReference type="PDBsum" id="8JLE"/>
<dbReference type="PDBsum" id="8JLF"/>
<dbReference type="PDBsum" id="8JLG"/>
<dbReference type="PDBsum" id="8JLH"/>
<dbReference type="PDBsum" id="8JLI"/>
<dbReference type="PDBsum" id="8JS8"/>
<dbReference type="PDBsum" id="8JS9"/>
<dbReference type="PDBsum" id="8K77"/>
<dbReference type="PDBsum" id="8UO9"/>
<dbReference type="PDBsum" id="8UOA"/>
<dbReference type="PDBsum" id="8YF0"/>
<dbReference type="PDBsum" id="8YF1"/>
<dbReference type="EMDB" id="EMD-36392"/>
<dbReference type="EMDB" id="EMD-36394"/>
<dbReference type="EMDB" id="EMD-36395"/>
<dbReference type="EMDB" id="EMD-36396"/>
<dbReference type="EMDB" id="EMD-36397"/>
<dbReference type="EMDB" id="EMD-36398"/>
<dbReference type="EMDB" id="EMD-36616"/>
<dbReference type="EMDB" id="EMD-36617"/>
<dbReference type="EMDB" id="EMD-36935"/>
<dbReference type="EMDB" id="EMD-39206"/>
<dbReference type="EMDB" id="EMD-39207"/>
<dbReference type="EMDB" id="EMD-42431"/>
<dbReference type="EMDB" id="EMD-42432"/>
<dbReference type="SMR" id="Q7L0J3"/>
<dbReference type="BioGRID" id="115229">
    <property type="interactions" value="86"/>
</dbReference>
<dbReference type="FunCoup" id="Q7L0J3">
    <property type="interactions" value="1103"/>
</dbReference>
<dbReference type="IntAct" id="Q7L0J3">
    <property type="interactions" value="52"/>
</dbReference>
<dbReference type="MINT" id="Q7L0J3"/>
<dbReference type="STRING" id="9606.ENSP00000358142"/>
<dbReference type="BindingDB" id="Q7L0J3"/>
<dbReference type="ChEMBL" id="CHEMBL1998"/>
<dbReference type="DrugBank" id="DB05541">
    <property type="generic name" value="Brivaracetam"/>
</dbReference>
<dbReference type="DrugBank" id="DB01202">
    <property type="generic name" value="Levetiracetam"/>
</dbReference>
<dbReference type="DrugBank" id="DB14977">
    <property type="generic name" value="Padsevonil"/>
</dbReference>
<dbReference type="DrugBank" id="DB05885">
    <property type="generic name" value="Seletracetam"/>
</dbReference>
<dbReference type="DrugCentral" id="Q7L0J3"/>
<dbReference type="GlyCosmos" id="Q7L0J3">
    <property type="glycosylation" value="3 sites, No reported glycans"/>
</dbReference>
<dbReference type="GlyGen" id="Q7L0J3">
    <property type="glycosylation" value="3 sites, 2 N-linked glycans (2 sites)"/>
</dbReference>
<dbReference type="iPTMnet" id="Q7L0J3"/>
<dbReference type="MetOSite" id="Q7L0J3"/>
<dbReference type="PhosphoSitePlus" id="Q7L0J3"/>
<dbReference type="BioMuta" id="SV2A"/>
<dbReference type="DMDM" id="74749878"/>
<dbReference type="jPOST" id="Q7L0J3"/>
<dbReference type="MassIVE" id="Q7L0J3"/>
<dbReference type="PaxDb" id="9606-ENSP00000358142"/>
<dbReference type="PeptideAtlas" id="Q7L0J3"/>
<dbReference type="ProteomicsDB" id="68731">
    <molecule id="Q7L0J3-1"/>
</dbReference>
<dbReference type="ProteomicsDB" id="68732">
    <molecule id="Q7L0J3-2"/>
</dbReference>
<dbReference type="Pumba" id="Q7L0J3"/>
<dbReference type="Antibodypedia" id="2184">
    <property type="antibodies" value="178 antibodies from 34 providers"/>
</dbReference>
<dbReference type="DNASU" id="9900"/>
<dbReference type="Ensembl" id="ENST00000369145.1">
    <molecule id="Q7L0J3-2"/>
    <property type="protein sequence ID" value="ENSP00000358141.1"/>
    <property type="gene ID" value="ENSG00000159164.10"/>
</dbReference>
<dbReference type="Ensembl" id="ENST00000369146.8">
    <molecule id="Q7L0J3-1"/>
    <property type="protein sequence ID" value="ENSP00000358142.3"/>
    <property type="gene ID" value="ENSG00000159164.10"/>
</dbReference>
<dbReference type="GeneID" id="9900"/>
<dbReference type="KEGG" id="hsa:9900"/>
<dbReference type="MANE-Select" id="ENST00000369146.8">
    <property type="protein sequence ID" value="ENSP00000358142.3"/>
    <property type="RefSeq nucleotide sequence ID" value="NM_014849.5"/>
    <property type="RefSeq protein sequence ID" value="NP_055664.3"/>
</dbReference>
<dbReference type="UCSC" id="uc001etg.4">
    <molecule id="Q7L0J3-1"/>
    <property type="organism name" value="human"/>
</dbReference>
<dbReference type="AGR" id="HGNC:20566"/>
<dbReference type="CTD" id="9900"/>
<dbReference type="DisGeNET" id="9900"/>
<dbReference type="GeneCards" id="SV2A"/>
<dbReference type="HGNC" id="HGNC:20566">
    <property type="gene designation" value="SV2A"/>
</dbReference>
<dbReference type="HPA" id="ENSG00000159164">
    <property type="expression patterns" value="Tissue enhanced (brain, parathyroid gland)"/>
</dbReference>
<dbReference type="MalaCards" id="SV2A"/>
<dbReference type="MIM" id="185860">
    <property type="type" value="gene"/>
</dbReference>
<dbReference type="MIM" id="620772">
    <property type="type" value="phenotype"/>
</dbReference>
<dbReference type="neXtProt" id="NX_Q7L0J3"/>
<dbReference type="OpenTargets" id="ENSG00000159164"/>
<dbReference type="PharmGKB" id="PA128394564"/>
<dbReference type="VEuPathDB" id="HostDB:ENSG00000159164"/>
<dbReference type="eggNOG" id="KOG0255">
    <property type="taxonomic scope" value="Eukaryota"/>
</dbReference>
<dbReference type="GeneTree" id="ENSGT00950000182940"/>
<dbReference type="HOGENOM" id="CLU_001265_46_15_1"/>
<dbReference type="InParanoid" id="Q7L0J3"/>
<dbReference type="OMA" id="NDKSMVF"/>
<dbReference type="OrthoDB" id="433512at2759"/>
<dbReference type="PAN-GO" id="Q7L0J3">
    <property type="GO annotations" value="3 GO annotations based on evolutionary models"/>
</dbReference>
<dbReference type="PhylomeDB" id="Q7L0J3"/>
<dbReference type="TreeFam" id="TF324824"/>
<dbReference type="PathwayCommons" id="Q7L0J3"/>
<dbReference type="Reactome" id="R-HSA-5250955">
    <property type="pathway name" value="Toxicity of botulinum toxin type D (botD)"/>
</dbReference>
<dbReference type="Reactome" id="R-HSA-5250968">
    <property type="pathway name" value="Toxicity of botulinum toxin type A (botA)"/>
</dbReference>
<dbReference type="Reactome" id="R-HSA-5250981">
    <property type="pathway name" value="Toxicity of botulinum toxin type F (botF)"/>
</dbReference>
<dbReference type="Reactome" id="R-HSA-5250992">
    <property type="pathway name" value="Toxicity of botulinum toxin type E (botE)"/>
</dbReference>
<dbReference type="SignaLink" id="Q7L0J3"/>
<dbReference type="SIGNOR" id="Q7L0J3"/>
<dbReference type="BioGRID-ORCS" id="9900">
    <property type="hits" value="18 hits in 1159 CRISPR screens"/>
</dbReference>
<dbReference type="CD-CODE" id="FB4E32DD">
    <property type="entry name" value="Presynaptic clusters and postsynaptic densities"/>
</dbReference>
<dbReference type="ChiTaRS" id="SV2A">
    <property type="organism name" value="human"/>
</dbReference>
<dbReference type="EvolutionaryTrace" id="Q7L0J3"/>
<dbReference type="GeneWiki" id="SV2A"/>
<dbReference type="GenomeRNAi" id="9900"/>
<dbReference type="Pharos" id="Q7L0J3">
    <property type="development level" value="Tclin"/>
</dbReference>
<dbReference type="PRO" id="PR:Q7L0J3"/>
<dbReference type="Proteomes" id="UP000005640">
    <property type="component" value="Chromosome 1"/>
</dbReference>
<dbReference type="RNAct" id="Q7L0J3">
    <property type="molecule type" value="protein"/>
</dbReference>
<dbReference type="Bgee" id="ENSG00000159164">
    <property type="expression patterns" value="Expressed in Brodmann (1909) area 10 and 153 other cell types or tissues"/>
</dbReference>
<dbReference type="GO" id="GO:0005911">
    <property type="term" value="C:cell-cell junction"/>
    <property type="evidence" value="ECO:0007669"/>
    <property type="project" value="Ensembl"/>
</dbReference>
<dbReference type="GO" id="GO:0005783">
    <property type="term" value="C:endoplasmic reticulum"/>
    <property type="evidence" value="ECO:0000314"/>
    <property type="project" value="LIFEdb"/>
</dbReference>
<dbReference type="GO" id="GO:0098982">
    <property type="term" value="C:GABA-ergic synapse"/>
    <property type="evidence" value="ECO:0007669"/>
    <property type="project" value="Ensembl"/>
</dbReference>
<dbReference type="GO" id="GO:0098978">
    <property type="term" value="C:glutamatergic synapse"/>
    <property type="evidence" value="ECO:0007669"/>
    <property type="project" value="Ensembl"/>
</dbReference>
<dbReference type="GO" id="GO:0031594">
    <property type="term" value="C:neuromuscular junction"/>
    <property type="evidence" value="ECO:0007669"/>
    <property type="project" value="Ensembl"/>
</dbReference>
<dbReference type="GO" id="GO:0043005">
    <property type="term" value="C:neuron projection"/>
    <property type="evidence" value="ECO:0000318"/>
    <property type="project" value="GO_Central"/>
</dbReference>
<dbReference type="GO" id="GO:0005886">
    <property type="term" value="C:plasma membrane"/>
    <property type="evidence" value="ECO:0000304"/>
    <property type="project" value="Reactome"/>
</dbReference>
<dbReference type="GO" id="GO:0048786">
    <property type="term" value="C:presynaptic active zone"/>
    <property type="evidence" value="ECO:0007669"/>
    <property type="project" value="Ensembl"/>
</dbReference>
<dbReference type="GO" id="GO:0008021">
    <property type="term" value="C:synaptic vesicle"/>
    <property type="evidence" value="ECO:0000304"/>
    <property type="project" value="ParkinsonsUK-UCL"/>
</dbReference>
<dbReference type="GO" id="GO:0030672">
    <property type="term" value="C:synaptic vesicle membrane"/>
    <property type="evidence" value="ECO:0000318"/>
    <property type="project" value="GO_Central"/>
</dbReference>
<dbReference type="GO" id="GO:0019901">
    <property type="term" value="F:protein kinase binding"/>
    <property type="evidence" value="ECO:0000250"/>
    <property type="project" value="ParkinsonsUK-UCL"/>
</dbReference>
<dbReference type="GO" id="GO:0022857">
    <property type="term" value="F:transmembrane transporter activity"/>
    <property type="evidence" value="ECO:0007669"/>
    <property type="project" value="InterPro"/>
</dbReference>
<dbReference type="GO" id="GO:0006874">
    <property type="term" value="P:intracellular calcium ion homeostasis"/>
    <property type="evidence" value="ECO:0007669"/>
    <property type="project" value="Ensembl"/>
</dbReference>
<dbReference type="GO" id="GO:0016082">
    <property type="term" value="P:synaptic vesicle priming"/>
    <property type="evidence" value="ECO:0007669"/>
    <property type="project" value="Ensembl"/>
</dbReference>
<dbReference type="CDD" id="cd17439">
    <property type="entry name" value="MFS_SV2A"/>
    <property type="match status" value="1"/>
</dbReference>
<dbReference type="FunFam" id="1.20.1250.20:FF:000009">
    <property type="entry name" value="Synaptic vesicle glycoprotein 2A"/>
    <property type="match status" value="1"/>
</dbReference>
<dbReference type="FunFam" id="2.160.20.80:FF:000001">
    <property type="entry name" value="Synaptic vesicle glycoprotein 2A"/>
    <property type="match status" value="1"/>
</dbReference>
<dbReference type="FunFam" id="1.20.1250.20:FF:000014">
    <property type="entry name" value="synaptic vesicle glycoprotein 2A"/>
    <property type="match status" value="1"/>
</dbReference>
<dbReference type="Gene3D" id="2.160.20.80">
    <property type="entry name" value="E3 ubiquitin-protein ligase SopA"/>
    <property type="match status" value="1"/>
</dbReference>
<dbReference type="Gene3D" id="1.20.1250.20">
    <property type="entry name" value="MFS general substrate transporter like domains"/>
    <property type="match status" value="2"/>
</dbReference>
<dbReference type="InterPro" id="IPR055415">
    <property type="entry name" value="LD_SV2"/>
</dbReference>
<dbReference type="InterPro" id="IPR011701">
    <property type="entry name" value="MFS"/>
</dbReference>
<dbReference type="InterPro" id="IPR020846">
    <property type="entry name" value="MFS_dom"/>
</dbReference>
<dbReference type="InterPro" id="IPR005828">
    <property type="entry name" value="MFS_sugar_transport-like"/>
</dbReference>
<dbReference type="InterPro" id="IPR036259">
    <property type="entry name" value="MFS_trans_sf"/>
</dbReference>
<dbReference type="InterPro" id="IPR005829">
    <property type="entry name" value="Sugar_transporter_CS"/>
</dbReference>
<dbReference type="InterPro" id="IPR022308">
    <property type="entry name" value="SV2"/>
</dbReference>
<dbReference type="NCBIfam" id="TIGR01299">
    <property type="entry name" value="synapt_SV2"/>
    <property type="match status" value="1"/>
</dbReference>
<dbReference type="PANTHER" id="PTHR23511">
    <property type="entry name" value="SYNAPTIC VESICLE GLYCOPROTEIN 2"/>
    <property type="match status" value="1"/>
</dbReference>
<dbReference type="PANTHER" id="PTHR23511:SF11">
    <property type="entry name" value="SYNAPTIC VESICLE GLYCOPROTEIN 2A"/>
    <property type="match status" value="1"/>
</dbReference>
<dbReference type="Pfam" id="PF23894">
    <property type="entry name" value="LD_SV2"/>
    <property type="match status" value="1"/>
</dbReference>
<dbReference type="Pfam" id="PF07690">
    <property type="entry name" value="MFS_1"/>
    <property type="match status" value="1"/>
</dbReference>
<dbReference type="Pfam" id="PF00083">
    <property type="entry name" value="Sugar_tr"/>
    <property type="match status" value="1"/>
</dbReference>
<dbReference type="SUPFAM" id="SSF103473">
    <property type="entry name" value="MFS general substrate transporter"/>
    <property type="match status" value="2"/>
</dbReference>
<dbReference type="SUPFAM" id="SSF141571">
    <property type="entry name" value="Pentapeptide repeat-like"/>
    <property type="match status" value="1"/>
</dbReference>
<dbReference type="PROSITE" id="PS50850">
    <property type="entry name" value="MFS"/>
    <property type="match status" value="1"/>
</dbReference>
<feature type="chain" id="PRO_0000239764" description="Synaptic vesicle glycoprotein 2A">
    <location>
        <begin position="1"/>
        <end position="742"/>
    </location>
</feature>
<feature type="topological domain" description="Cytoplasmic" evidence="4">
    <location>
        <begin position="1"/>
        <end position="169"/>
    </location>
</feature>
<feature type="transmembrane region" description="Helical" evidence="4">
    <location>
        <begin position="170"/>
        <end position="190"/>
    </location>
</feature>
<feature type="topological domain" description="Extracellular" evidence="4">
    <location>
        <begin position="191"/>
        <end position="205"/>
    </location>
</feature>
<feature type="transmembrane region" description="Helical" evidence="4">
    <location>
        <begin position="206"/>
        <end position="226"/>
    </location>
</feature>
<feature type="topological domain" description="Cytoplasmic" evidence="4">
    <location>
        <begin position="227"/>
        <end position="233"/>
    </location>
</feature>
<feature type="transmembrane region" description="Helical" evidence="4">
    <location>
        <begin position="234"/>
        <end position="254"/>
    </location>
</feature>
<feature type="topological domain" description="Extracellular" evidence="4">
    <location>
        <begin position="255"/>
        <end position="262"/>
    </location>
</feature>
<feature type="transmembrane region" description="Helical" evidence="4">
    <location>
        <begin position="263"/>
        <end position="283"/>
    </location>
</feature>
<feature type="topological domain" description="Cytoplasmic" evidence="4">
    <location>
        <begin position="284"/>
        <end position="294"/>
    </location>
</feature>
<feature type="transmembrane region" description="Helical" evidence="4">
    <location>
        <begin position="295"/>
        <end position="315"/>
    </location>
</feature>
<feature type="topological domain" description="Extracellular" evidence="4">
    <location>
        <begin position="316"/>
        <end position="334"/>
    </location>
</feature>
<feature type="transmembrane region" description="Helical" evidence="4">
    <location>
        <begin position="335"/>
        <end position="355"/>
    </location>
</feature>
<feature type="topological domain" description="Cytoplasmic" evidence="4">
    <location>
        <begin position="356"/>
        <end position="447"/>
    </location>
</feature>
<feature type="transmembrane region" description="Helical" evidence="4">
    <location>
        <begin position="448"/>
        <end position="468"/>
    </location>
</feature>
<feature type="topological domain" description="Extracellular" evidence="4">
    <location>
        <begin position="469"/>
        <end position="598"/>
    </location>
</feature>
<feature type="transmembrane region" description="Helical" evidence="4">
    <location>
        <begin position="599"/>
        <end position="619"/>
    </location>
</feature>
<feature type="topological domain" description="Cytoplasmic" evidence="4">
    <location>
        <begin position="620"/>
        <end position="626"/>
    </location>
</feature>
<feature type="transmembrane region" description="Helical" evidence="4">
    <location>
        <begin position="627"/>
        <end position="647"/>
    </location>
</feature>
<feature type="topological domain" description="Extracellular" evidence="4">
    <location>
        <begin position="648"/>
        <end position="651"/>
    </location>
</feature>
<feature type="transmembrane region" description="Helical" evidence="4">
    <location>
        <begin position="652"/>
        <end position="672"/>
    </location>
</feature>
<feature type="topological domain" description="Cytoplasmic" evidence="4">
    <location>
        <begin position="673"/>
        <end position="685"/>
    </location>
</feature>
<feature type="transmembrane region" description="Helical" evidence="4">
    <location>
        <begin position="686"/>
        <end position="708"/>
    </location>
</feature>
<feature type="topological domain" description="Extracellular" evidence="4">
    <location>
        <begin position="709"/>
        <end position="712"/>
    </location>
</feature>
<feature type="transmembrane region" description="Helical" evidence="4">
    <location>
        <begin position="713"/>
        <end position="731"/>
    </location>
</feature>
<feature type="topological domain" description="Cytoplasmic" evidence="4">
    <location>
        <begin position="732"/>
        <end position="742"/>
    </location>
</feature>
<feature type="region of interest" description="Interaction with SYT1" evidence="1">
    <location>
        <begin position="1"/>
        <end position="57"/>
    </location>
</feature>
<feature type="region of interest" description="Disordered" evidence="5">
    <location>
        <begin position="33"/>
        <end position="144"/>
    </location>
</feature>
<feature type="compositionally biased region" description="Basic and acidic residues" evidence="5">
    <location>
        <begin position="33"/>
        <end position="49"/>
    </location>
</feature>
<feature type="compositionally biased region" description="Gly residues" evidence="5">
    <location>
        <begin position="122"/>
        <end position="137"/>
    </location>
</feature>
<feature type="modified residue" description="Phosphoserine" evidence="12">
    <location>
        <position position="80"/>
    </location>
</feature>
<feature type="modified residue" description="Phosphoserine" evidence="12">
    <location>
        <position position="81"/>
    </location>
</feature>
<feature type="modified residue" description="Phosphothreonine" evidence="12">
    <location>
        <position position="84"/>
    </location>
</feature>
<feature type="modified residue" description="Phosphoserine" evidence="3">
    <location>
        <position position="127"/>
    </location>
</feature>
<feature type="modified residue" description="Phosphoserine" evidence="2">
    <location>
        <position position="393"/>
    </location>
</feature>
<feature type="modified residue" description="Phosphotyrosine" evidence="3">
    <location>
        <position position="480"/>
    </location>
</feature>
<feature type="glycosylation site" description="N-linked (GlcNAc...) asparagine" evidence="4">
    <location>
        <position position="498"/>
    </location>
</feature>
<feature type="glycosylation site" description="N-linked (GlcNAc...) asparagine" evidence="4">
    <location>
        <position position="548"/>
    </location>
</feature>
<feature type="glycosylation site" description="N-linked (GlcNAc...) asparagine" evidence="4">
    <location>
        <position position="573"/>
    </location>
</feature>
<feature type="splice variant" id="VSP_019265" description="In isoform 2." evidence="9">
    <location>
        <begin position="683"/>
        <end position="742"/>
    </location>
</feature>
<feature type="sequence variant" id="VAR_089450" description="In DEE113; likely pathogenic." evidence="8">
    <location>
        <begin position="289"/>
        <end position="742"/>
    </location>
</feature>
<feature type="sequence variant" id="VAR_089451" description="In DEE113; uncertain significance; dbSNP:rs782514088." evidence="6">
    <original>R</original>
    <variation>Q</variation>
    <location>
        <position position="383"/>
    </location>
</feature>
<feature type="sequence conflict" description="In Ref. 4; CAD97824." evidence="10" ref="4">
    <original>G</original>
    <variation>D</variation>
    <location>
        <position position="100"/>
    </location>
</feature>
<feature type="sequence conflict" description="In Ref. 3; BAC11645." evidence="10" ref="3">
    <original>D</original>
    <variation>G</variation>
    <location>
        <position position="404"/>
    </location>
</feature>
<feature type="sequence conflict" description="In Ref. 4; CAD97824." evidence="10" ref="4">
    <original>E</original>
    <variation>G</variation>
    <location>
        <position position="493"/>
    </location>
</feature>
<feature type="sequence conflict" description="In Ref. 3; BAC11645." evidence="10" ref="3">
    <original>V</original>
    <variation>A</variation>
    <location>
        <position position="524"/>
    </location>
</feature>
<feature type="sequence conflict" description="In Ref. 3; BAC11645." evidence="10" ref="3">
    <original>T</original>
    <variation>A</variation>
    <location>
        <position position="544"/>
    </location>
</feature>
<feature type="sequence conflict" description="In Ref. 3; BAC11645." evidence="10" ref="3">
    <original>G</original>
    <variation>D</variation>
    <location>
        <position position="582"/>
    </location>
</feature>
<feature type="sequence conflict" description="In Ref. 3; BAC11645." evidence="10" ref="3">
    <original>G</original>
    <variation>R</variation>
    <location>
        <position position="611"/>
    </location>
</feature>
<feature type="helix" evidence="16">
    <location>
        <begin position="138"/>
        <end position="159"/>
    </location>
</feature>
<feature type="helix" evidence="16">
    <location>
        <begin position="163"/>
        <end position="182"/>
    </location>
</feature>
<feature type="helix" evidence="16">
    <location>
        <begin position="185"/>
        <end position="197"/>
    </location>
</feature>
<feature type="turn" evidence="16">
    <location>
        <begin position="201"/>
        <end position="203"/>
    </location>
</feature>
<feature type="helix" evidence="16">
    <location>
        <begin position="204"/>
        <end position="229"/>
    </location>
</feature>
<feature type="helix" evidence="16">
    <location>
        <begin position="231"/>
        <end position="249"/>
    </location>
</feature>
<feature type="helix" evidence="16">
    <location>
        <begin position="256"/>
        <end position="270"/>
    </location>
</feature>
<feature type="helix" evidence="16">
    <location>
        <begin position="272"/>
        <end position="281"/>
    </location>
</feature>
<feature type="helix" evidence="16">
    <location>
        <begin position="286"/>
        <end position="288"/>
    </location>
</feature>
<feature type="helix" evidence="16">
    <location>
        <begin position="290"/>
        <end position="294"/>
    </location>
</feature>
<feature type="helix" evidence="16">
    <location>
        <begin position="295"/>
        <end position="297"/>
    </location>
</feature>
<feature type="helix" evidence="16">
    <location>
        <begin position="298"/>
        <end position="314"/>
    </location>
</feature>
<feature type="helix" evidence="16">
    <location>
        <begin position="332"/>
        <end position="351"/>
    </location>
</feature>
<feature type="helix" evidence="16">
    <location>
        <begin position="358"/>
        <end position="363"/>
    </location>
</feature>
<feature type="helix" evidence="16">
    <location>
        <begin position="368"/>
        <end position="385"/>
    </location>
</feature>
<feature type="helix" evidence="16">
    <location>
        <begin position="419"/>
        <end position="438"/>
    </location>
</feature>
<feature type="strand" evidence="16">
    <location>
        <begin position="440"/>
        <end position="444"/>
    </location>
</feature>
<feature type="helix" evidence="14">
    <location>
        <begin position="481"/>
        <end position="483"/>
    </location>
</feature>
<feature type="strand" evidence="13">
    <location>
        <begin position="485"/>
        <end position="492"/>
    </location>
</feature>
<feature type="strand" evidence="13">
    <location>
        <begin position="500"/>
        <end position="513"/>
    </location>
</feature>
<feature type="strand" evidence="13">
    <location>
        <begin position="515"/>
        <end position="528"/>
    </location>
</feature>
<feature type="strand" evidence="13">
    <location>
        <begin position="530"/>
        <end position="533"/>
    </location>
</feature>
<feature type="strand" evidence="13">
    <location>
        <begin position="535"/>
        <end position="543"/>
    </location>
</feature>
<feature type="strand" evidence="13">
    <location>
        <begin position="545"/>
        <end position="548"/>
    </location>
</feature>
<feature type="strand" evidence="13">
    <location>
        <begin position="550"/>
        <end position="553"/>
    </location>
</feature>
<feature type="strand" evidence="13">
    <location>
        <begin position="555"/>
        <end position="559"/>
    </location>
</feature>
<feature type="helix" evidence="13">
    <location>
        <begin position="563"/>
        <end position="565"/>
    </location>
</feature>
<feature type="strand" evidence="15">
    <location>
        <begin position="566"/>
        <end position="568"/>
    </location>
</feature>
<feature type="strand" evidence="13">
    <location>
        <begin position="570"/>
        <end position="578"/>
    </location>
</feature>
<feature type="helix" evidence="16">
    <location>
        <begin position="594"/>
        <end position="618"/>
    </location>
</feature>
<feature type="turn" evidence="16">
    <location>
        <begin position="619"/>
        <end position="621"/>
    </location>
</feature>
<feature type="helix" evidence="16">
    <location>
        <begin position="624"/>
        <end position="640"/>
    </location>
</feature>
<feature type="helix" evidence="16">
    <location>
        <begin position="641"/>
        <end position="643"/>
    </location>
</feature>
<feature type="helix" evidence="16">
    <location>
        <begin position="648"/>
        <end position="675"/>
    </location>
</feature>
<feature type="turn" evidence="16">
    <location>
        <begin position="679"/>
        <end position="681"/>
    </location>
</feature>
<feature type="helix" evidence="16">
    <location>
        <begin position="682"/>
        <end position="705"/>
    </location>
</feature>
<feature type="turn" evidence="16">
    <location>
        <begin position="706"/>
        <end position="710"/>
    </location>
</feature>
<feature type="helix" evidence="16">
    <location>
        <begin position="713"/>
        <end position="730"/>
    </location>
</feature>
<feature type="strand" evidence="15">
    <location>
        <begin position="737"/>
        <end position="739"/>
    </location>
</feature>
<proteinExistence type="evidence at protein level"/>
<sequence>MEEGFRDRAAFIRGAKDIAKEVKKHAAKKVVKGLDRVQDEYSRRSYSRFEEEDDDDDFPAPSDGYYRGEGTQDEEEGGASSDATEGHDEDDEIYEGEYQGIPRAESGGKGERMADGAPLAGVRGGLSDGEGPPGGRGEAQRRKEREELAQQYEAILRECGHGRFQWTLYFVLGLALMADGVEVFVVGFVLPSAEKDMCLSDSNKGMLGLIVYLGMMVGAFLWGGLADRLGRRQCLLISLSVNSVFAFFSSFVQGYGTFLFCRLLSGVGIGGSIPIVFSYFSEFLAQEKRGEHLSWLCMFWMIGGVYAAAMAWAIIPHYGWSFQMGSAYQFHSWRVFVLVCAFPSVFAIGALTTQPESPRFFLENGKHDEAWMVLKQVHDTNMRAKGHPERVFSVTHIKTIHQEDELIEIQSDTGTWYQRWGVRALSLGGQVWGNFLSCFGPEYRRITLMMMGVWFTMSFSYYGLTVWFPDMIRHLQAVDYASRTKVFPGERVEHVTFNFTLENQIHRGGQYFNDKFIGLRLKSVSFEDSLFEECYFEDVTSSNTFFRNCTFINTVFYNTDLFEYKFVNSRLINSTFLHNKEGCPLDVTGTGEGAYMVYFVSFLGTLAVLPGNIVSALLMDKIGRLRMLAGSSVMSCVSCFFLSFGNSESAMIALLCLFGGVSIASWNALDVLTVELYPSDKRTTAFGFLNALCKLAAVLGISIFTSFVGITKAAPILFASAALALGSSLALKLPETRGQVLQ</sequence>
<comment type="function">
    <text evidence="1">Plays a role in the control of regulated secretion in neural and endocrine cells, enhancing selectively low-frequency neurotransmission. Positively regulates vesicle fusion by maintaining the readily releasable pool of secretory vesicles (By similarity).</text>
</comment>
<comment type="function">
    <text evidence="7 11">(Microbial infection) Receptor for the C.botulinum neurotoxin type A2 (BoNT/A, botA); glycosylation is not essential but enhances the interaction (PubMed:29649119). Probably also serves as a receptor for the closely related C.botulinum neurotoxin type A1.</text>
</comment>
<comment type="subunit">
    <text evidence="1">Interacts with SYT1/synaptotagmin-1 in a calcium-dependent manner. Binds the adapter protein complex AP-2 (By similarity).</text>
</comment>
<comment type="subunit">
    <text evidence="11">(Microbial infection) Interacts with C.botulinum neurotoxin type A2 (BoNT/A, botA) (PubMed:29649119). Interaction is improved by glycosylation of SV2 (PubMed:29649119).</text>
</comment>
<comment type="subcellular location">
    <subcellularLocation>
        <location evidence="3">Presynapse</location>
    </subcellularLocation>
    <subcellularLocation>
        <location evidence="2">Cytoplasmic vesicle</location>
        <location evidence="2">Secretory vesicle</location>
        <location evidence="2">Synaptic vesicle membrane</location>
        <topology evidence="2">Multi-pass membrane protein</topology>
    </subcellularLocation>
    <text evidence="2 3">Enriched in chromaffin granules, not present in adrenal microsomes. Associated with both insulin granules and synaptic-like microvesicles in insulin-secreting cells of the pancreas (By similarity). Colocalizes with ATP2B1 at photoreceptor synaptic terminals.</text>
</comment>
<comment type="alternative products">
    <event type="alternative splicing"/>
    <isoform>
        <id>Q7L0J3-1</id>
        <name>1</name>
        <sequence type="displayed"/>
    </isoform>
    <isoform>
        <id>Q7L0J3-2</id>
        <name>2</name>
        <sequence type="described" ref="VSP_019265"/>
    </isoform>
</comment>
<comment type="PTM">
    <text evidence="1">Phosphorylation by CK1 of the N-terminal cytoplasmic domain regulates interaction with SYT1.</text>
</comment>
<comment type="PTM">
    <text evidence="1">N-glycosylated.</text>
</comment>
<comment type="disease" evidence="6 8">
    <disease id="DI-06871">
        <name>Developmental and epileptic encephalopathy 113</name>
        <acronym>DEE113</acronym>
        <description>A form of epileptic encephalopathy, a heterogeneous group of early-onset epilepsies characterized by refractory seizures, neurodevelopmental impairment, and poor prognosis. Development is normal prior to seizure onset, after which cognitive and motor delays become apparent. DEE113 is an autosomal recessive form characterized by severe early-onset recurrent epilepsy.</description>
        <dbReference type="MIM" id="620772"/>
    </disease>
    <text>The disease may be caused by variants affecting the gene represented in this entry.</text>
</comment>
<comment type="miscellaneous">
    <text>Identified as the brain binding-site for the antiepileptic drug levetiracetam/lev.</text>
</comment>
<comment type="similarity">
    <text evidence="10">Belongs to the major facilitator superfamily.</text>
</comment>
<comment type="sequence caution" evidence="10">
    <conflict type="erroneous initiation">
        <sequence resource="EMBL-CDS" id="BAA34456"/>
    </conflict>
    <text>Extended N-terminus.</text>
</comment>
<comment type="sequence caution" evidence="10">
    <conflict type="erroneous gene model prediction">
        <sequence resource="EMBL-CDS" id="CAI12573"/>
    </conflict>
</comment>
<name>SV2A_HUMAN</name>
<organism>
    <name type="scientific">Homo sapiens</name>
    <name type="common">Human</name>
    <dbReference type="NCBI Taxonomy" id="9606"/>
    <lineage>
        <taxon>Eukaryota</taxon>
        <taxon>Metazoa</taxon>
        <taxon>Chordata</taxon>
        <taxon>Craniata</taxon>
        <taxon>Vertebrata</taxon>
        <taxon>Euteleostomi</taxon>
        <taxon>Mammalia</taxon>
        <taxon>Eutheria</taxon>
        <taxon>Euarchontoglires</taxon>
        <taxon>Primates</taxon>
        <taxon>Haplorrhini</taxon>
        <taxon>Catarrhini</taxon>
        <taxon>Hominidae</taxon>
        <taxon>Homo</taxon>
    </lineage>
</organism>
<reference key="1">
    <citation type="journal article" date="1998" name="DNA Res.">
        <title>Prediction of the coding sequences of unidentified human genes. XI. The complete sequences of 100 new cDNA clones from brain which code for large proteins in vitro.</title>
        <authorList>
            <person name="Nagase T."/>
            <person name="Ishikawa K."/>
            <person name="Suyama M."/>
            <person name="Kikuno R."/>
            <person name="Miyajima N."/>
            <person name="Tanaka A."/>
            <person name="Kotani H."/>
            <person name="Nomura N."/>
            <person name="Ohara O."/>
        </authorList>
    </citation>
    <scope>NUCLEOTIDE SEQUENCE [LARGE SCALE MRNA] (ISOFORM 1)</scope>
    <source>
        <tissue>Brain</tissue>
    </source>
</reference>
<reference key="2">
    <citation type="submission" date="2004-01" db="EMBL/GenBank/DDBJ databases">
        <authorList>
            <person name="Ohara O."/>
            <person name="Suyama M."/>
            <person name="Nagase T."/>
            <person name="Ishikawa K."/>
            <person name="Kikuno R."/>
        </authorList>
    </citation>
    <scope>SEQUENCE REVISION</scope>
</reference>
<reference key="3">
    <citation type="journal article" date="2005" name="DNA Res.">
        <title>Signal sequence and keyword trap in silico for selection of full-length human cDNAs encoding secretion or membrane proteins from oligo-capped cDNA libraries.</title>
        <authorList>
            <person name="Otsuki T."/>
            <person name="Ota T."/>
            <person name="Nishikawa T."/>
            <person name="Hayashi K."/>
            <person name="Suzuki Y."/>
            <person name="Yamamoto J."/>
            <person name="Wakamatsu A."/>
            <person name="Kimura K."/>
            <person name="Sakamoto K."/>
            <person name="Hatano N."/>
            <person name="Kawai Y."/>
            <person name="Ishii S."/>
            <person name="Saito K."/>
            <person name="Kojima S."/>
            <person name="Sugiyama T."/>
            <person name="Ono T."/>
            <person name="Okano K."/>
            <person name="Yoshikawa Y."/>
            <person name="Aotsuka S."/>
            <person name="Sasaki N."/>
            <person name="Hattori A."/>
            <person name="Okumura K."/>
            <person name="Nagai K."/>
            <person name="Sugano S."/>
            <person name="Isogai T."/>
        </authorList>
    </citation>
    <scope>NUCLEOTIDE SEQUENCE [LARGE SCALE MRNA] (ISOFORM 2)</scope>
    <source>
        <tissue>Teratocarcinoma</tissue>
    </source>
</reference>
<reference key="4">
    <citation type="journal article" date="2007" name="BMC Genomics">
        <title>The full-ORF clone resource of the German cDNA consortium.</title>
        <authorList>
            <person name="Bechtel S."/>
            <person name="Rosenfelder H."/>
            <person name="Duda A."/>
            <person name="Schmidt C.P."/>
            <person name="Ernst U."/>
            <person name="Wellenreuther R."/>
            <person name="Mehrle A."/>
            <person name="Schuster C."/>
            <person name="Bahr A."/>
            <person name="Bloecker H."/>
            <person name="Heubner D."/>
            <person name="Hoerlein A."/>
            <person name="Michel G."/>
            <person name="Wedler H."/>
            <person name="Koehrer K."/>
            <person name="Ottenwaelder B."/>
            <person name="Poustka A."/>
            <person name="Wiemann S."/>
            <person name="Schupp I."/>
        </authorList>
    </citation>
    <scope>NUCLEOTIDE SEQUENCE [LARGE SCALE MRNA] (ISOFORM 1)</scope>
    <source>
        <tissue>Retina</tissue>
    </source>
</reference>
<reference key="5">
    <citation type="journal article" date="2006" name="Nature">
        <title>The DNA sequence and biological annotation of human chromosome 1.</title>
        <authorList>
            <person name="Gregory S.G."/>
            <person name="Barlow K.F."/>
            <person name="McLay K.E."/>
            <person name="Kaul R."/>
            <person name="Swarbreck D."/>
            <person name="Dunham A."/>
            <person name="Scott C.E."/>
            <person name="Howe K.L."/>
            <person name="Woodfine K."/>
            <person name="Spencer C.C.A."/>
            <person name="Jones M.C."/>
            <person name="Gillson C."/>
            <person name="Searle S."/>
            <person name="Zhou Y."/>
            <person name="Kokocinski F."/>
            <person name="McDonald L."/>
            <person name="Evans R."/>
            <person name="Phillips K."/>
            <person name="Atkinson A."/>
            <person name="Cooper R."/>
            <person name="Jones C."/>
            <person name="Hall R.E."/>
            <person name="Andrews T.D."/>
            <person name="Lloyd C."/>
            <person name="Ainscough R."/>
            <person name="Almeida J.P."/>
            <person name="Ambrose K.D."/>
            <person name="Anderson F."/>
            <person name="Andrew R.W."/>
            <person name="Ashwell R.I.S."/>
            <person name="Aubin K."/>
            <person name="Babbage A.K."/>
            <person name="Bagguley C.L."/>
            <person name="Bailey J."/>
            <person name="Beasley H."/>
            <person name="Bethel G."/>
            <person name="Bird C.P."/>
            <person name="Bray-Allen S."/>
            <person name="Brown J.Y."/>
            <person name="Brown A.J."/>
            <person name="Buckley D."/>
            <person name="Burton J."/>
            <person name="Bye J."/>
            <person name="Carder C."/>
            <person name="Chapman J.C."/>
            <person name="Clark S.Y."/>
            <person name="Clarke G."/>
            <person name="Clee C."/>
            <person name="Cobley V."/>
            <person name="Collier R.E."/>
            <person name="Corby N."/>
            <person name="Coville G.J."/>
            <person name="Davies J."/>
            <person name="Deadman R."/>
            <person name="Dunn M."/>
            <person name="Earthrowl M."/>
            <person name="Ellington A.G."/>
            <person name="Errington H."/>
            <person name="Frankish A."/>
            <person name="Frankland J."/>
            <person name="French L."/>
            <person name="Garner P."/>
            <person name="Garnett J."/>
            <person name="Gay L."/>
            <person name="Ghori M.R.J."/>
            <person name="Gibson R."/>
            <person name="Gilby L.M."/>
            <person name="Gillett W."/>
            <person name="Glithero R.J."/>
            <person name="Grafham D.V."/>
            <person name="Griffiths C."/>
            <person name="Griffiths-Jones S."/>
            <person name="Grocock R."/>
            <person name="Hammond S."/>
            <person name="Harrison E.S.I."/>
            <person name="Hart E."/>
            <person name="Haugen E."/>
            <person name="Heath P.D."/>
            <person name="Holmes S."/>
            <person name="Holt K."/>
            <person name="Howden P.J."/>
            <person name="Hunt A.R."/>
            <person name="Hunt S.E."/>
            <person name="Hunter G."/>
            <person name="Isherwood J."/>
            <person name="James R."/>
            <person name="Johnson C."/>
            <person name="Johnson D."/>
            <person name="Joy A."/>
            <person name="Kay M."/>
            <person name="Kershaw J.K."/>
            <person name="Kibukawa M."/>
            <person name="Kimberley A.M."/>
            <person name="King A."/>
            <person name="Knights A.J."/>
            <person name="Lad H."/>
            <person name="Laird G."/>
            <person name="Lawlor S."/>
            <person name="Leongamornlert D.A."/>
            <person name="Lloyd D.M."/>
            <person name="Loveland J."/>
            <person name="Lovell J."/>
            <person name="Lush M.J."/>
            <person name="Lyne R."/>
            <person name="Martin S."/>
            <person name="Mashreghi-Mohammadi M."/>
            <person name="Matthews L."/>
            <person name="Matthews N.S.W."/>
            <person name="McLaren S."/>
            <person name="Milne S."/>
            <person name="Mistry S."/>
            <person name="Moore M.J.F."/>
            <person name="Nickerson T."/>
            <person name="O'Dell C.N."/>
            <person name="Oliver K."/>
            <person name="Palmeiri A."/>
            <person name="Palmer S.A."/>
            <person name="Parker A."/>
            <person name="Patel D."/>
            <person name="Pearce A.V."/>
            <person name="Peck A.I."/>
            <person name="Pelan S."/>
            <person name="Phelps K."/>
            <person name="Phillimore B.J."/>
            <person name="Plumb R."/>
            <person name="Rajan J."/>
            <person name="Raymond C."/>
            <person name="Rouse G."/>
            <person name="Saenphimmachak C."/>
            <person name="Sehra H.K."/>
            <person name="Sheridan E."/>
            <person name="Shownkeen R."/>
            <person name="Sims S."/>
            <person name="Skuce C.D."/>
            <person name="Smith M."/>
            <person name="Steward C."/>
            <person name="Subramanian S."/>
            <person name="Sycamore N."/>
            <person name="Tracey A."/>
            <person name="Tromans A."/>
            <person name="Van Helmond Z."/>
            <person name="Wall M."/>
            <person name="Wallis J.M."/>
            <person name="White S."/>
            <person name="Whitehead S.L."/>
            <person name="Wilkinson J.E."/>
            <person name="Willey D.L."/>
            <person name="Williams H."/>
            <person name="Wilming L."/>
            <person name="Wray P.W."/>
            <person name="Wu Z."/>
            <person name="Coulson A."/>
            <person name="Vaudin M."/>
            <person name="Sulston J.E."/>
            <person name="Durbin R.M."/>
            <person name="Hubbard T."/>
            <person name="Wooster R."/>
            <person name="Dunham I."/>
            <person name="Carter N.P."/>
            <person name="McVean G."/>
            <person name="Ross M.T."/>
            <person name="Harrow J."/>
            <person name="Olson M.V."/>
            <person name="Beck S."/>
            <person name="Rogers J."/>
            <person name="Bentley D.R."/>
        </authorList>
    </citation>
    <scope>NUCLEOTIDE SEQUENCE [LARGE SCALE GENOMIC DNA]</scope>
</reference>
<reference key="6">
    <citation type="submission" date="2005-09" db="EMBL/GenBank/DDBJ databases">
        <authorList>
            <person name="Mural R.J."/>
            <person name="Istrail S."/>
            <person name="Sutton G.G."/>
            <person name="Florea L."/>
            <person name="Halpern A.L."/>
            <person name="Mobarry C.M."/>
            <person name="Lippert R."/>
            <person name="Walenz B."/>
            <person name="Shatkay H."/>
            <person name="Dew I."/>
            <person name="Miller J.R."/>
            <person name="Flanigan M.J."/>
            <person name="Edwards N.J."/>
            <person name="Bolanos R."/>
            <person name="Fasulo D."/>
            <person name="Halldorsson B.V."/>
            <person name="Hannenhalli S."/>
            <person name="Turner R."/>
            <person name="Yooseph S."/>
            <person name="Lu F."/>
            <person name="Nusskern D.R."/>
            <person name="Shue B.C."/>
            <person name="Zheng X.H."/>
            <person name="Zhong F."/>
            <person name="Delcher A.L."/>
            <person name="Huson D.H."/>
            <person name="Kravitz S.A."/>
            <person name="Mouchard L."/>
            <person name="Reinert K."/>
            <person name="Remington K.A."/>
            <person name="Clark A.G."/>
            <person name="Waterman M.S."/>
            <person name="Eichler E.E."/>
            <person name="Adams M.D."/>
            <person name="Hunkapiller M.W."/>
            <person name="Myers E.W."/>
            <person name="Venter J.C."/>
        </authorList>
    </citation>
    <scope>NUCLEOTIDE SEQUENCE [LARGE SCALE GENOMIC DNA]</scope>
</reference>
<reference key="7">
    <citation type="journal article" date="2004" name="Genome Res.">
        <title>The status, quality, and expansion of the NIH full-length cDNA project: the Mammalian Gene Collection (MGC).</title>
        <authorList>
            <consortium name="The MGC Project Team"/>
        </authorList>
    </citation>
    <scope>NUCLEOTIDE SEQUENCE [LARGE SCALE MRNA] (ISOFORM 1)</scope>
    <source>
        <tissue>Brain</tissue>
        <tissue>Ovary</tissue>
    </source>
</reference>
<reference key="8">
    <citation type="journal article" date="2004" name="Proc. Natl. Acad. Sci. U.S.A.">
        <title>The synaptic vesicle protein SV2A is the binding site for the antiepileptic drug levetiracetam.</title>
        <authorList>
            <person name="Lynch B.A."/>
            <person name="Lambeng N."/>
            <person name="Nocka K."/>
            <person name="Kensel-Hammes P."/>
            <person name="Bajjalieh S.M."/>
            <person name="Matagne A."/>
            <person name="Fuks B."/>
        </authorList>
    </citation>
    <scope>CHARACTERIZATION AS BINDING-SITE FOR ANTIEPILEPTIC DRUG LEVETIRACETAM</scope>
</reference>
<reference key="9">
    <citation type="journal article" date="2009" name="Sci. Signal.">
        <title>Quantitative phosphoproteomic analysis of T cell receptor signaling reveals system-wide modulation of protein-protein interactions.</title>
        <authorList>
            <person name="Mayya V."/>
            <person name="Lundgren D.H."/>
            <person name="Hwang S.-I."/>
            <person name="Rezaul K."/>
            <person name="Wu L."/>
            <person name="Eng J.K."/>
            <person name="Rodionov V."/>
            <person name="Han D.K."/>
        </authorList>
    </citation>
    <scope>PHOSPHORYLATION [LARGE SCALE ANALYSIS] AT SER-80; SER-81 AND THR-84</scope>
    <scope>IDENTIFICATION BY MASS SPECTROMETRY [LARGE SCALE ANALYSIS]</scope>
    <source>
        <tissue>Leukemic T-cell</tissue>
    </source>
</reference>
<reference key="10">
    <citation type="journal article" date="2015" name="Pediatr. Neurol.">
        <title>Homozygous Mutation in Synaptic Vesicle Glycoprotein 2A Gene Results in Intractable Epilepsy, Involuntary Movements, Microcephaly, and Developmental and Growth Retardation.</title>
        <authorList>
            <person name="Serajee F.J."/>
            <person name="Huq A.M."/>
        </authorList>
    </citation>
    <scope>INVOLVEMENT IN DEE113</scope>
    <scope>VARIANT DEE113 GLN-383</scope>
</reference>
<reference key="11">
    <citation type="journal article" date="2018" name="Toxins">
        <title>Crystal structure of botulinum neurotoxin A2 in complex with the human protein receptor SV2C reveals plasticity in receptor binding.</title>
        <authorList>
            <person name="Gustafsson R."/>
            <person name="Zhang S."/>
            <person name="Masuyer G."/>
            <person name="Dong M."/>
            <person name="Stenmark P."/>
        </authorList>
    </citation>
    <scope>FUNCTION AS C.BOTULINUM NEUROTOXIN TYPE A2 RECEPTOR (MICROBIAL INFECTION)</scope>
    <scope>SUBUNIT (MICROBIAL INFECTION)</scope>
</reference>
<reference key="12">
    <citation type="journal article" date="2024" name="Eur. J. Hum. Genet.">
        <title>Biallelic variants in the synaptic vesicle glycoprotein 2 A are associated with epileptic encephalopathy.</title>
        <authorList>
            <person name="Al-Maawali A."/>
            <person name="Al-Murshedi F."/>
            <person name="Al-Futaisi A."/>
            <person name="Mansy A."/>
            <person name="Al-Habsi A."/>
            <person name="Girisha K.M."/>
        </authorList>
    </citation>
    <scope>INVOLVEMENT IN DEE113</scope>
    <scope>VARIANT DEE113 289-ARG--GLN-742 DEL</scope>
</reference>
<gene>
    <name type="primary">SV2A</name>
    <name type="synonym">KIAA0736</name>
    <name type="ORF">PSEC0174</name>
</gene>